<name>RK14_TOBAC</name>
<accession>P06382</accession>
<evidence type="ECO:0000255" key="1">
    <source>
        <dbReference type="HAMAP-Rule" id="MF_01367"/>
    </source>
</evidence>
<evidence type="ECO:0000305" key="2"/>
<protein>
    <recommendedName>
        <fullName evidence="1">Large ribosomal subunit protein uL14c</fullName>
    </recommendedName>
    <alternativeName>
        <fullName evidence="2">50S ribosomal protein L14, chloroplastic</fullName>
    </alternativeName>
</protein>
<reference key="1">
    <citation type="journal article" date="1986" name="Proc. Natl. Acad. Sci. U.S.A.">
        <title>Genes for the eight ribosomal proteins are clustered on the chloroplast genome of tobacco (Nicotiana tabacum): similarity to the S10 and spc operons of Escherichia coli.</title>
        <authorList>
            <person name="Tanaka M."/>
            <person name="Wakasugi T."/>
            <person name="Sugita M."/>
            <person name="Shinozaki K."/>
            <person name="Sugiura M."/>
        </authorList>
    </citation>
    <scope>NUCLEOTIDE SEQUENCE [GENOMIC DNA]</scope>
</reference>
<reference key="2">
    <citation type="journal article" date="1986" name="EMBO J.">
        <title>The complete nucleotide sequence of the tobacco chloroplast genome: its gene organization and expression.</title>
        <authorList>
            <person name="Shinozaki K."/>
            <person name="Ohme M."/>
            <person name="Tanaka M."/>
            <person name="Wakasugi T."/>
            <person name="Hayashida N."/>
            <person name="Matsubayashi T."/>
            <person name="Zaita N."/>
            <person name="Chunwongse J."/>
            <person name="Obokata J."/>
            <person name="Yamaguchi-Shinozaki K."/>
            <person name="Ohto C."/>
            <person name="Torazawa K."/>
            <person name="Meng B.-Y."/>
            <person name="Sugita M."/>
            <person name="Deno H."/>
            <person name="Kamogashira T."/>
            <person name="Yamada K."/>
            <person name="Kusuda J."/>
            <person name="Takaiwa F."/>
            <person name="Kato A."/>
            <person name="Tohdoh N."/>
            <person name="Shimada H."/>
            <person name="Sugiura M."/>
        </authorList>
    </citation>
    <scope>NUCLEOTIDE SEQUENCE [LARGE SCALE GENOMIC DNA]</scope>
    <source>
        <strain>cv. Bright Yellow 4</strain>
    </source>
</reference>
<reference key="3">
    <citation type="submission" date="2005-09" db="EMBL/GenBank/DDBJ databases">
        <authorList>
            <person name="Yukawa M."/>
        </authorList>
    </citation>
    <scope>SEQUENCE REVISION</scope>
</reference>
<keyword id="KW-0150">Chloroplast</keyword>
<keyword id="KW-0934">Plastid</keyword>
<keyword id="KW-1185">Reference proteome</keyword>
<keyword id="KW-0687">Ribonucleoprotein</keyword>
<keyword id="KW-0689">Ribosomal protein</keyword>
<keyword id="KW-0694">RNA-binding</keyword>
<keyword id="KW-0699">rRNA-binding</keyword>
<dbReference type="EMBL" id="Z00044">
    <property type="protein sequence ID" value="CAA77379.2"/>
    <property type="molecule type" value="Genomic_DNA"/>
</dbReference>
<dbReference type="PIR" id="A02791">
    <property type="entry name" value="R5NT14"/>
</dbReference>
<dbReference type="RefSeq" id="NP_054535.2">
    <property type="nucleotide sequence ID" value="NC_001879.2"/>
</dbReference>
<dbReference type="SMR" id="P06382"/>
<dbReference type="GeneID" id="800439"/>
<dbReference type="KEGG" id="nta:800439"/>
<dbReference type="OMA" id="EWEIART"/>
<dbReference type="OrthoDB" id="274765at2759"/>
<dbReference type="Proteomes" id="UP000084051">
    <property type="component" value="Unplaced"/>
</dbReference>
<dbReference type="GO" id="GO:0009507">
    <property type="term" value="C:chloroplast"/>
    <property type="evidence" value="ECO:0007669"/>
    <property type="project" value="UniProtKB-SubCell"/>
</dbReference>
<dbReference type="GO" id="GO:0015934">
    <property type="term" value="C:large ribosomal subunit"/>
    <property type="evidence" value="ECO:0007669"/>
    <property type="project" value="InterPro"/>
</dbReference>
<dbReference type="GO" id="GO:0019843">
    <property type="term" value="F:rRNA binding"/>
    <property type="evidence" value="ECO:0007669"/>
    <property type="project" value="UniProtKB-UniRule"/>
</dbReference>
<dbReference type="GO" id="GO:0003735">
    <property type="term" value="F:structural constituent of ribosome"/>
    <property type="evidence" value="ECO:0007669"/>
    <property type="project" value="InterPro"/>
</dbReference>
<dbReference type="GO" id="GO:0006412">
    <property type="term" value="P:translation"/>
    <property type="evidence" value="ECO:0007669"/>
    <property type="project" value="UniProtKB-UniRule"/>
</dbReference>
<dbReference type="CDD" id="cd00337">
    <property type="entry name" value="Ribosomal_uL14"/>
    <property type="match status" value="1"/>
</dbReference>
<dbReference type="FunFam" id="2.40.150.20:FF:000002">
    <property type="entry name" value="50S ribosomal protein L14, chloroplastic"/>
    <property type="match status" value="1"/>
</dbReference>
<dbReference type="Gene3D" id="2.40.150.20">
    <property type="entry name" value="Ribosomal protein L14"/>
    <property type="match status" value="1"/>
</dbReference>
<dbReference type="HAMAP" id="MF_01367">
    <property type="entry name" value="Ribosomal_uL14"/>
    <property type="match status" value="1"/>
</dbReference>
<dbReference type="InterPro" id="IPR000218">
    <property type="entry name" value="Ribosomal_uL14"/>
</dbReference>
<dbReference type="InterPro" id="IPR005745">
    <property type="entry name" value="Ribosomal_uL14_bac-type"/>
</dbReference>
<dbReference type="InterPro" id="IPR019972">
    <property type="entry name" value="Ribosomal_uL14_CS"/>
</dbReference>
<dbReference type="InterPro" id="IPR036853">
    <property type="entry name" value="Ribosomal_uL14_sf"/>
</dbReference>
<dbReference type="NCBIfam" id="TIGR01067">
    <property type="entry name" value="rplN_bact"/>
    <property type="match status" value="1"/>
</dbReference>
<dbReference type="PANTHER" id="PTHR11761">
    <property type="entry name" value="50S/60S RIBOSOMAL PROTEIN L14/L23"/>
    <property type="match status" value="1"/>
</dbReference>
<dbReference type="PANTHER" id="PTHR11761:SF3">
    <property type="entry name" value="LARGE RIBOSOMAL SUBUNIT PROTEIN UL14M"/>
    <property type="match status" value="1"/>
</dbReference>
<dbReference type="Pfam" id="PF00238">
    <property type="entry name" value="Ribosomal_L14"/>
    <property type="match status" value="1"/>
</dbReference>
<dbReference type="SMART" id="SM01374">
    <property type="entry name" value="Ribosomal_L14"/>
    <property type="match status" value="1"/>
</dbReference>
<dbReference type="SUPFAM" id="SSF50193">
    <property type="entry name" value="Ribosomal protein L14"/>
    <property type="match status" value="1"/>
</dbReference>
<dbReference type="PROSITE" id="PS00049">
    <property type="entry name" value="RIBOSOMAL_L14"/>
    <property type="match status" value="1"/>
</dbReference>
<gene>
    <name evidence="1" type="primary">rpl14</name>
</gene>
<comment type="function">
    <text evidence="1">Binds to 23S rRNA.</text>
</comment>
<comment type="subunit">
    <text evidence="1">Part of the 50S ribosomal subunit.</text>
</comment>
<comment type="subcellular location">
    <subcellularLocation>
        <location>Plastid</location>
        <location>Chloroplast</location>
    </subcellularLocation>
</comment>
<comment type="similarity">
    <text evidence="1">Belongs to the universal ribosomal protein uL14 family.</text>
</comment>
<geneLocation type="chloroplast"/>
<sequence>MIQPQTHLNVADNSGARELMCIRIIGASNRRYAHIGDVIVAVIKEAVPNMPLERSEVVRAVIVRTCKELKRDNGMIIRYDDNAAVVIDQEGNPKGTRIFGAIARELRELNFTKIVSLAPEVL</sequence>
<feature type="chain" id="PRO_0000128601" description="Large ribosomal subunit protein uL14c">
    <location>
        <begin position="1"/>
        <end position="122"/>
    </location>
</feature>
<organism>
    <name type="scientific">Nicotiana tabacum</name>
    <name type="common">Common tobacco</name>
    <dbReference type="NCBI Taxonomy" id="4097"/>
    <lineage>
        <taxon>Eukaryota</taxon>
        <taxon>Viridiplantae</taxon>
        <taxon>Streptophyta</taxon>
        <taxon>Embryophyta</taxon>
        <taxon>Tracheophyta</taxon>
        <taxon>Spermatophyta</taxon>
        <taxon>Magnoliopsida</taxon>
        <taxon>eudicotyledons</taxon>
        <taxon>Gunneridae</taxon>
        <taxon>Pentapetalae</taxon>
        <taxon>asterids</taxon>
        <taxon>lamiids</taxon>
        <taxon>Solanales</taxon>
        <taxon>Solanaceae</taxon>
        <taxon>Nicotianoideae</taxon>
        <taxon>Nicotianeae</taxon>
        <taxon>Nicotiana</taxon>
    </lineage>
</organism>
<proteinExistence type="inferred from homology"/>